<name>C5210_DROME</name>
<proteinExistence type="evidence at protein level"/>
<keyword id="KW-0147">Chitin-binding</keyword>
<keyword id="KW-0217">Developmental protein</keyword>
<keyword id="KW-0903">Direct protein sequencing</keyword>
<keyword id="KW-1015">Disulfide bond</keyword>
<keyword id="KW-0325">Glycoprotein</keyword>
<keyword id="KW-1185">Reference proteome</keyword>
<keyword id="KW-0964">Secreted</keyword>
<keyword id="KW-0732">Signal</keyword>
<reference key="1">
    <citation type="journal article" date="1995" name="Gene">
        <title>An abundantly secreted glycoprotein from Drosophila melanogaster is related to mammalian secretory proteins produced in rheumatoid tissues and by activated macrophages.</title>
        <authorList>
            <person name="Kirkpatrick R.B."/>
            <person name="Matico R.E."/>
            <person name="McNulty D.E."/>
            <person name="Strickler J.E."/>
            <person name="Rosenberg M.M."/>
        </authorList>
    </citation>
    <scope>NUCLEOTIDE SEQUENCE [MRNA]</scope>
    <scope>PROTEIN SEQUENCE OF 19-41; 269-279; 380-386 AND 415-432</scope>
    <scope>SUBCELLULAR LOCATION</scope>
    <scope>GLYCOSYLATION</scope>
    <scope>TISSUE SPECIFICITY</scope>
    <scope>DEVELOPMENTAL STAGE</scope>
    <scope>VARIANT ILE-266</scope>
    <source>
        <tissue>Embryo</tissue>
    </source>
</reference>
<reference key="2">
    <citation type="journal article" date="2010" name="Mol. Biol. Evol.">
        <title>On the utility of short intron sequences as a reference for the detection of positive and negative selection in Drosophila.</title>
        <authorList>
            <person name="Parsch J."/>
            <person name="Novozhilov S."/>
            <person name="Saminadin-Peter S.S."/>
            <person name="Wong K.M."/>
            <person name="Andolfatto P."/>
        </authorList>
    </citation>
    <scope>NUCLEOTIDE SEQUENCE [GENOMIC DNA]</scope>
    <scope>VARIANTS LEU-228; ILE-266 AND SER-296</scope>
    <source>
        <strain>ZBMEL131</strain>
        <strain>ZBMEL157</strain>
        <strain>ZBMEL186</strain>
        <strain>ZBMEL191</strain>
        <strain>ZBMEL229</strain>
        <strain>ZBMEL377</strain>
        <strain>ZBMEL384</strain>
        <strain>ZBMEL398</strain>
        <strain>ZBMEL82</strain>
        <strain>ZBMEL84</strain>
    </source>
</reference>
<reference key="3">
    <citation type="journal article" date="2000" name="Science">
        <title>The genome sequence of Drosophila melanogaster.</title>
        <authorList>
            <person name="Adams M.D."/>
            <person name="Celniker S.E."/>
            <person name="Holt R.A."/>
            <person name="Evans C.A."/>
            <person name="Gocayne J.D."/>
            <person name="Amanatides P.G."/>
            <person name="Scherer S.E."/>
            <person name="Li P.W."/>
            <person name="Hoskins R.A."/>
            <person name="Galle R.F."/>
            <person name="George R.A."/>
            <person name="Lewis S.E."/>
            <person name="Richards S."/>
            <person name="Ashburner M."/>
            <person name="Henderson S.N."/>
            <person name="Sutton G.G."/>
            <person name="Wortman J.R."/>
            <person name="Yandell M.D."/>
            <person name="Zhang Q."/>
            <person name="Chen L.X."/>
            <person name="Brandon R.C."/>
            <person name="Rogers Y.-H.C."/>
            <person name="Blazej R.G."/>
            <person name="Champe M."/>
            <person name="Pfeiffer B.D."/>
            <person name="Wan K.H."/>
            <person name="Doyle C."/>
            <person name="Baxter E.G."/>
            <person name="Helt G."/>
            <person name="Nelson C.R."/>
            <person name="Miklos G.L.G."/>
            <person name="Abril J.F."/>
            <person name="Agbayani A."/>
            <person name="An H.-J."/>
            <person name="Andrews-Pfannkoch C."/>
            <person name="Baldwin D."/>
            <person name="Ballew R.M."/>
            <person name="Basu A."/>
            <person name="Baxendale J."/>
            <person name="Bayraktaroglu L."/>
            <person name="Beasley E.M."/>
            <person name="Beeson K.Y."/>
            <person name="Benos P.V."/>
            <person name="Berman B.P."/>
            <person name="Bhandari D."/>
            <person name="Bolshakov S."/>
            <person name="Borkova D."/>
            <person name="Botchan M.R."/>
            <person name="Bouck J."/>
            <person name="Brokstein P."/>
            <person name="Brottier P."/>
            <person name="Burtis K.C."/>
            <person name="Busam D.A."/>
            <person name="Butler H."/>
            <person name="Cadieu E."/>
            <person name="Center A."/>
            <person name="Chandra I."/>
            <person name="Cherry J.M."/>
            <person name="Cawley S."/>
            <person name="Dahlke C."/>
            <person name="Davenport L.B."/>
            <person name="Davies P."/>
            <person name="de Pablos B."/>
            <person name="Delcher A."/>
            <person name="Deng Z."/>
            <person name="Mays A.D."/>
            <person name="Dew I."/>
            <person name="Dietz S.M."/>
            <person name="Dodson K."/>
            <person name="Doup L.E."/>
            <person name="Downes M."/>
            <person name="Dugan-Rocha S."/>
            <person name="Dunkov B.C."/>
            <person name="Dunn P."/>
            <person name="Durbin K.J."/>
            <person name="Evangelista C.C."/>
            <person name="Ferraz C."/>
            <person name="Ferriera S."/>
            <person name="Fleischmann W."/>
            <person name="Fosler C."/>
            <person name="Gabrielian A.E."/>
            <person name="Garg N.S."/>
            <person name="Gelbart W.M."/>
            <person name="Glasser K."/>
            <person name="Glodek A."/>
            <person name="Gong F."/>
            <person name="Gorrell J.H."/>
            <person name="Gu Z."/>
            <person name="Guan P."/>
            <person name="Harris M."/>
            <person name="Harris N.L."/>
            <person name="Harvey D.A."/>
            <person name="Heiman T.J."/>
            <person name="Hernandez J.R."/>
            <person name="Houck J."/>
            <person name="Hostin D."/>
            <person name="Houston K.A."/>
            <person name="Howland T.J."/>
            <person name="Wei M.-H."/>
            <person name="Ibegwam C."/>
            <person name="Jalali M."/>
            <person name="Kalush F."/>
            <person name="Karpen G.H."/>
            <person name="Ke Z."/>
            <person name="Kennison J.A."/>
            <person name="Ketchum K.A."/>
            <person name="Kimmel B.E."/>
            <person name="Kodira C.D."/>
            <person name="Kraft C.L."/>
            <person name="Kravitz S."/>
            <person name="Kulp D."/>
            <person name="Lai Z."/>
            <person name="Lasko P."/>
            <person name="Lei Y."/>
            <person name="Levitsky A.A."/>
            <person name="Li J.H."/>
            <person name="Li Z."/>
            <person name="Liang Y."/>
            <person name="Lin X."/>
            <person name="Liu X."/>
            <person name="Mattei B."/>
            <person name="McIntosh T.C."/>
            <person name="McLeod M.P."/>
            <person name="McPherson D."/>
            <person name="Merkulov G."/>
            <person name="Milshina N.V."/>
            <person name="Mobarry C."/>
            <person name="Morris J."/>
            <person name="Moshrefi A."/>
            <person name="Mount S.M."/>
            <person name="Moy M."/>
            <person name="Murphy B."/>
            <person name="Murphy L."/>
            <person name="Muzny D.M."/>
            <person name="Nelson D.L."/>
            <person name="Nelson D.R."/>
            <person name="Nelson K.A."/>
            <person name="Nixon K."/>
            <person name="Nusskern D.R."/>
            <person name="Pacleb J.M."/>
            <person name="Palazzolo M."/>
            <person name="Pittman G.S."/>
            <person name="Pan S."/>
            <person name="Pollard J."/>
            <person name="Puri V."/>
            <person name="Reese M.G."/>
            <person name="Reinert K."/>
            <person name="Remington K."/>
            <person name="Saunders R.D.C."/>
            <person name="Scheeler F."/>
            <person name="Shen H."/>
            <person name="Shue B.C."/>
            <person name="Siden-Kiamos I."/>
            <person name="Simpson M."/>
            <person name="Skupski M.P."/>
            <person name="Smith T.J."/>
            <person name="Spier E."/>
            <person name="Spradling A.C."/>
            <person name="Stapleton M."/>
            <person name="Strong R."/>
            <person name="Sun E."/>
            <person name="Svirskas R."/>
            <person name="Tector C."/>
            <person name="Turner R."/>
            <person name="Venter E."/>
            <person name="Wang A.H."/>
            <person name="Wang X."/>
            <person name="Wang Z.-Y."/>
            <person name="Wassarman D.A."/>
            <person name="Weinstock G.M."/>
            <person name="Weissenbach J."/>
            <person name="Williams S.M."/>
            <person name="Woodage T."/>
            <person name="Worley K.C."/>
            <person name="Wu D."/>
            <person name="Yang S."/>
            <person name="Yao Q.A."/>
            <person name="Ye J."/>
            <person name="Yeh R.-F."/>
            <person name="Zaveri J.S."/>
            <person name="Zhan M."/>
            <person name="Zhang G."/>
            <person name="Zhao Q."/>
            <person name="Zheng L."/>
            <person name="Zheng X.H."/>
            <person name="Zhong F.N."/>
            <person name="Zhong W."/>
            <person name="Zhou X."/>
            <person name="Zhu S.C."/>
            <person name="Zhu X."/>
            <person name="Smith H.O."/>
            <person name="Gibbs R.A."/>
            <person name="Myers E.W."/>
            <person name="Rubin G.M."/>
            <person name="Venter J.C."/>
        </authorList>
    </citation>
    <scope>NUCLEOTIDE SEQUENCE [LARGE SCALE GENOMIC DNA]</scope>
    <source>
        <strain>Berkeley</strain>
    </source>
</reference>
<reference key="4">
    <citation type="journal article" date="2002" name="Genome Biol.">
        <title>Annotation of the Drosophila melanogaster euchromatic genome: a systematic review.</title>
        <authorList>
            <person name="Misra S."/>
            <person name="Crosby M.A."/>
            <person name="Mungall C.J."/>
            <person name="Matthews B.B."/>
            <person name="Campbell K.S."/>
            <person name="Hradecky P."/>
            <person name="Huang Y."/>
            <person name="Kaminker J.S."/>
            <person name="Millburn G.H."/>
            <person name="Prochnik S.E."/>
            <person name="Smith C.D."/>
            <person name="Tupy J.L."/>
            <person name="Whitfield E.J."/>
            <person name="Bayraktaroglu L."/>
            <person name="Berman B.P."/>
            <person name="Bettencourt B.R."/>
            <person name="Celniker S.E."/>
            <person name="de Grey A.D.N.J."/>
            <person name="Drysdale R.A."/>
            <person name="Harris N.L."/>
            <person name="Richter J."/>
            <person name="Russo S."/>
            <person name="Schroeder A.J."/>
            <person name="Shu S.Q."/>
            <person name="Stapleton M."/>
            <person name="Yamada C."/>
            <person name="Ashburner M."/>
            <person name="Gelbart W.M."/>
            <person name="Rubin G.M."/>
            <person name="Lewis S.E."/>
        </authorList>
    </citation>
    <scope>GENOME REANNOTATION</scope>
    <source>
        <strain>Berkeley</strain>
    </source>
</reference>
<reference key="5">
    <citation type="journal article" date="2002" name="Genome Biol.">
        <title>A Drosophila full-length cDNA resource.</title>
        <authorList>
            <person name="Stapleton M."/>
            <person name="Carlson J.W."/>
            <person name="Brokstein P."/>
            <person name="Yu C."/>
            <person name="Champe M."/>
            <person name="George R.A."/>
            <person name="Guarin H."/>
            <person name="Kronmiller B."/>
            <person name="Pacleb J.M."/>
            <person name="Park S."/>
            <person name="Wan K.H."/>
            <person name="Rubin G.M."/>
            <person name="Celniker S.E."/>
        </authorList>
    </citation>
    <scope>NUCLEOTIDE SEQUENCE [LARGE SCALE MRNA]</scope>
    <source>
        <strain>Berkeley</strain>
        <tissue>Embryo</tissue>
    </source>
</reference>
<reference key="6">
    <citation type="submission" date="2007-01" db="EMBL/GenBank/DDBJ databases">
        <authorList>
            <person name="Stapleton M."/>
            <person name="Carlson J.W."/>
            <person name="Frise E."/>
            <person name="Kapadia B."/>
            <person name="Park S."/>
            <person name="Wan K.H."/>
            <person name="Yu C."/>
            <person name="Celniker S.E."/>
        </authorList>
    </citation>
    <scope>NUCLEOTIDE SEQUENCE [LARGE SCALE MRNA]</scope>
    <source>
        <strain>Berkeley</strain>
        <tissue>Head</tissue>
    </source>
</reference>
<reference key="7">
    <citation type="journal article" date="2008" name="Insect Biochem. Mol. Biol.">
        <title>Characterization of recombinant chitinase-like proteins of Drosophila melanogaster and Tribolium castaneum.</title>
        <authorList>
            <person name="Zhu Q."/>
            <person name="Arakane Y."/>
            <person name="Beeman R.W."/>
            <person name="Kramer K.J."/>
            <person name="Muthukrishnan S."/>
        </authorList>
    </citation>
    <scope>CHITIN-BINDING</scope>
    <scope>LACK OF ENZYME ACTIVITY</scope>
    <scope>SUBCELLULAR LOCATION</scope>
</reference>
<accession>Q23997</accession>
<accession>A2RVC8</accession>
<accession>E1UIC7</accession>
<accession>E1UIC9</accession>
<accession>E1UID0</accession>
<accession>E1UID3</accession>
<accession>E1UID4</accession>
<accession>Q9V7S9</accession>
<dbReference type="EMBL" id="U13825">
    <property type="protein sequence ID" value="AAC48306.1"/>
    <property type="molecule type" value="mRNA"/>
</dbReference>
<dbReference type="EMBL" id="FN544129">
    <property type="protein sequence ID" value="CBA35210.1"/>
    <property type="molecule type" value="Genomic_DNA"/>
</dbReference>
<dbReference type="EMBL" id="FN544130">
    <property type="protein sequence ID" value="CBA35211.1"/>
    <property type="molecule type" value="Genomic_DNA"/>
</dbReference>
<dbReference type="EMBL" id="FN544131">
    <property type="protein sequence ID" value="CBA35212.1"/>
    <property type="molecule type" value="Genomic_DNA"/>
</dbReference>
<dbReference type="EMBL" id="FN544132">
    <property type="protein sequence ID" value="CBA35213.1"/>
    <property type="molecule type" value="Genomic_DNA"/>
</dbReference>
<dbReference type="EMBL" id="FN544133">
    <property type="protein sequence ID" value="CBA35214.1"/>
    <property type="molecule type" value="Genomic_DNA"/>
</dbReference>
<dbReference type="EMBL" id="FN544134">
    <property type="protein sequence ID" value="CBA35215.1"/>
    <property type="molecule type" value="Genomic_DNA"/>
</dbReference>
<dbReference type="EMBL" id="FN544135">
    <property type="protein sequence ID" value="CBA35216.1"/>
    <property type="molecule type" value="Genomic_DNA"/>
</dbReference>
<dbReference type="EMBL" id="FN544136">
    <property type="protein sequence ID" value="CBA35217.1"/>
    <property type="molecule type" value="Genomic_DNA"/>
</dbReference>
<dbReference type="EMBL" id="FN544137">
    <property type="protein sequence ID" value="CBA35218.1"/>
    <property type="molecule type" value="Genomic_DNA"/>
</dbReference>
<dbReference type="EMBL" id="FN544138">
    <property type="protein sequence ID" value="CBA35219.1"/>
    <property type="molecule type" value="Genomic_DNA"/>
</dbReference>
<dbReference type="EMBL" id="AE013599">
    <property type="protein sequence ID" value="AAF57965.1"/>
    <property type="molecule type" value="Genomic_DNA"/>
</dbReference>
<dbReference type="EMBL" id="AY058510">
    <property type="protein sequence ID" value="AAL13739.1"/>
    <property type="molecule type" value="mRNA"/>
</dbReference>
<dbReference type="EMBL" id="BT029919">
    <property type="protein sequence ID" value="ABM92793.1"/>
    <property type="molecule type" value="mRNA"/>
</dbReference>
<dbReference type="PIR" id="JC4038">
    <property type="entry name" value="JC4038"/>
</dbReference>
<dbReference type="RefSeq" id="NP_001286499.1">
    <property type="nucleotide sequence ID" value="NM_001299570.1"/>
</dbReference>
<dbReference type="RefSeq" id="NP_477081.1">
    <property type="nucleotide sequence ID" value="NM_057733.4"/>
</dbReference>
<dbReference type="SMR" id="Q23997"/>
<dbReference type="BioGRID" id="62579">
    <property type="interactions" value="2"/>
</dbReference>
<dbReference type="FunCoup" id="Q23997">
    <property type="interactions" value="25"/>
</dbReference>
<dbReference type="IntAct" id="Q23997">
    <property type="interactions" value="1"/>
</dbReference>
<dbReference type="STRING" id="7227.FBpp0309072"/>
<dbReference type="CAZy" id="GH18">
    <property type="family name" value="Glycoside Hydrolase Family 18"/>
</dbReference>
<dbReference type="GlyCosmos" id="Q23997">
    <property type="glycosylation" value="1 site, No reported glycans"/>
</dbReference>
<dbReference type="GlyGen" id="Q23997">
    <property type="glycosylation" value="1 site"/>
</dbReference>
<dbReference type="PaxDb" id="7227-FBpp0086257"/>
<dbReference type="DNASU" id="36868"/>
<dbReference type="EnsemblMetazoa" id="FBtr0087111">
    <property type="protein sequence ID" value="FBpp0086257"/>
    <property type="gene ID" value="FBgn0013763"/>
</dbReference>
<dbReference type="EnsemblMetazoa" id="FBtr0340066">
    <property type="protein sequence ID" value="FBpp0309072"/>
    <property type="gene ID" value="FBgn0013763"/>
</dbReference>
<dbReference type="GeneID" id="36868"/>
<dbReference type="KEGG" id="dme:Dmel_CG5210"/>
<dbReference type="UCSC" id="CG5210-RA">
    <property type="organism name" value="d. melanogaster"/>
</dbReference>
<dbReference type="AGR" id="FB:FBgn0013763"/>
<dbReference type="CTD" id="36868"/>
<dbReference type="FlyBase" id="FBgn0013763">
    <property type="gene designation" value="Idgf6"/>
</dbReference>
<dbReference type="VEuPathDB" id="VectorBase:FBgn0013763"/>
<dbReference type="eggNOG" id="KOG2806">
    <property type="taxonomic scope" value="Eukaryota"/>
</dbReference>
<dbReference type="GeneTree" id="ENSGT00940000167840"/>
<dbReference type="HOGENOM" id="CLU_002833_3_2_1"/>
<dbReference type="InParanoid" id="Q23997"/>
<dbReference type="OMA" id="YWLRNSC"/>
<dbReference type="OrthoDB" id="76388at2759"/>
<dbReference type="PhylomeDB" id="Q23997"/>
<dbReference type="Reactome" id="R-DME-6798695">
    <property type="pathway name" value="Neutrophil degranulation"/>
</dbReference>
<dbReference type="BioGRID-ORCS" id="36868">
    <property type="hits" value="0 hits in 1 CRISPR screen"/>
</dbReference>
<dbReference type="GenomeRNAi" id="36868"/>
<dbReference type="PRO" id="PR:Q23997"/>
<dbReference type="Proteomes" id="UP000000803">
    <property type="component" value="Chromosome 2R"/>
</dbReference>
<dbReference type="Bgee" id="FBgn0013763">
    <property type="expression patterns" value="Expressed in embryonic/larval hemocyte (Drosophila) and 176 other cell types or tissues"/>
</dbReference>
<dbReference type="ExpressionAtlas" id="Q23997">
    <property type="expression patterns" value="baseline and differential"/>
</dbReference>
<dbReference type="GO" id="GO:0005576">
    <property type="term" value="C:extracellular region"/>
    <property type="evidence" value="ECO:0007005"/>
    <property type="project" value="FlyBase"/>
</dbReference>
<dbReference type="GO" id="GO:0005615">
    <property type="term" value="C:extracellular space"/>
    <property type="evidence" value="ECO:0000314"/>
    <property type="project" value="FlyBase"/>
</dbReference>
<dbReference type="GO" id="GO:0008061">
    <property type="term" value="F:chitin binding"/>
    <property type="evidence" value="ECO:0000314"/>
    <property type="project" value="FlyBase"/>
</dbReference>
<dbReference type="GO" id="GO:0008084">
    <property type="term" value="F:imaginal disc growth factor receptor binding"/>
    <property type="evidence" value="ECO:0000250"/>
    <property type="project" value="FlyBase"/>
</dbReference>
<dbReference type="GO" id="GO:0005975">
    <property type="term" value="P:carbohydrate metabolic process"/>
    <property type="evidence" value="ECO:0007669"/>
    <property type="project" value="InterPro"/>
</dbReference>
<dbReference type="GO" id="GO:0006032">
    <property type="term" value="P:chitin catabolic process"/>
    <property type="evidence" value="ECO:0000318"/>
    <property type="project" value="GO_Central"/>
</dbReference>
<dbReference type="GO" id="GO:0040003">
    <property type="term" value="P:chitin-based cuticle development"/>
    <property type="evidence" value="ECO:0000315"/>
    <property type="project" value="FlyBase"/>
</dbReference>
<dbReference type="GO" id="GO:0018990">
    <property type="term" value="P:ecdysis, chitin-based cuticle"/>
    <property type="evidence" value="ECO:0000315"/>
    <property type="project" value="FlyBase"/>
</dbReference>
<dbReference type="GO" id="GO:0007444">
    <property type="term" value="P:imaginal disc development"/>
    <property type="evidence" value="ECO:0000250"/>
    <property type="project" value="FlyBase"/>
</dbReference>
<dbReference type="GO" id="GO:0032882">
    <property type="term" value="P:regulation of chitin metabolic process"/>
    <property type="evidence" value="ECO:0000315"/>
    <property type="project" value="FlyBase"/>
</dbReference>
<dbReference type="GO" id="GO:0035152">
    <property type="term" value="P:regulation of tube architecture, open tracheal system"/>
    <property type="evidence" value="ECO:0000315"/>
    <property type="project" value="FlyBase"/>
</dbReference>
<dbReference type="GO" id="GO:0042060">
    <property type="term" value="P:wound healing"/>
    <property type="evidence" value="ECO:0000315"/>
    <property type="project" value="FlyBase"/>
</dbReference>
<dbReference type="CDD" id="cd02873">
    <property type="entry name" value="GH18_IDGF"/>
    <property type="match status" value="1"/>
</dbReference>
<dbReference type="FunFam" id="3.10.50.10:FF:000007">
    <property type="entry name" value="chitinase-like protein Idgf4"/>
    <property type="match status" value="1"/>
</dbReference>
<dbReference type="FunFam" id="3.20.20.80:FF:000071">
    <property type="entry name" value="Imaginal disc growth factor"/>
    <property type="match status" value="1"/>
</dbReference>
<dbReference type="Gene3D" id="3.10.50.10">
    <property type="match status" value="1"/>
</dbReference>
<dbReference type="Gene3D" id="3.20.20.80">
    <property type="entry name" value="Glycosidases"/>
    <property type="match status" value="1"/>
</dbReference>
<dbReference type="InterPro" id="IPR011583">
    <property type="entry name" value="Chitinase_II/V-like_cat"/>
</dbReference>
<dbReference type="InterPro" id="IPR029070">
    <property type="entry name" value="Chitinase_insertion_sf"/>
</dbReference>
<dbReference type="InterPro" id="IPR001223">
    <property type="entry name" value="Glyco_hydro18_cat"/>
</dbReference>
<dbReference type="InterPro" id="IPR017853">
    <property type="entry name" value="Glycoside_hydrolase_SF"/>
</dbReference>
<dbReference type="InterPro" id="IPR050314">
    <property type="entry name" value="Glycosyl_Hydrlase_18"/>
</dbReference>
<dbReference type="InterPro" id="IPR015520">
    <property type="entry name" value="IDGF"/>
</dbReference>
<dbReference type="PANTHER" id="PTHR11177">
    <property type="entry name" value="CHITINASE"/>
    <property type="match status" value="1"/>
</dbReference>
<dbReference type="PANTHER" id="PTHR11177:SF235">
    <property type="entry name" value="CHITINASE-LIKE PROTEIN IDGF1-RELATED"/>
    <property type="match status" value="1"/>
</dbReference>
<dbReference type="Pfam" id="PF00704">
    <property type="entry name" value="Glyco_hydro_18"/>
    <property type="match status" value="1"/>
</dbReference>
<dbReference type="SMART" id="SM00636">
    <property type="entry name" value="Glyco_18"/>
    <property type="match status" value="1"/>
</dbReference>
<dbReference type="SUPFAM" id="SSF51445">
    <property type="entry name" value="(Trans)glycosidases"/>
    <property type="match status" value="1"/>
</dbReference>
<dbReference type="SUPFAM" id="SSF54556">
    <property type="entry name" value="Chitinase insertion domain"/>
    <property type="match status" value="1"/>
</dbReference>
<dbReference type="PROSITE" id="PS51910">
    <property type="entry name" value="GH18_2"/>
    <property type="match status" value="1"/>
</dbReference>
<comment type="function">
    <text evidence="1">Probably required to stimulate the proliferation, polarization and motility of imaginal disk cells. May act by stabilizing the binding of insulin-like peptides to its receptor through a simultaneous interaction with both molecules to form a multiprotein signaling complex (By similarity).</text>
</comment>
<comment type="subcellular location">
    <subcellularLocation>
        <location evidence="3 5">Secreted</location>
    </subcellularLocation>
    <text>It is transported to target tissues via hemolymph.</text>
</comment>
<comment type="tissue specificity">
    <text evidence="5">In larvae, it is expressed in the fat body and by hemocytes.</text>
</comment>
<comment type="developmental stage">
    <text evidence="5">Expressed throughout development and in adults.</text>
</comment>
<comment type="PTM">
    <text evidence="5">Glycosylated.</text>
</comment>
<comment type="similarity">
    <text evidence="6">Belongs to the glycosyl hydrolase 18 family. IDGF subfamily.</text>
</comment>
<comment type="caution">
    <text evidence="6">Lacks the typical Glu active site in position 165 that is replaced by a Gln residue, exhibits no chitinolytic activity towards either polymeric and oligomeric substrates. Its precise function remains unclear.</text>
</comment>
<evidence type="ECO:0000250" key="1"/>
<evidence type="ECO:0000255" key="2">
    <source>
        <dbReference type="PROSITE-ProRule" id="PRU01258"/>
    </source>
</evidence>
<evidence type="ECO:0000269" key="3">
    <source>
    </source>
</evidence>
<evidence type="ECO:0000269" key="4">
    <source>
    </source>
</evidence>
<evidence type="ECO:0000269" key="5">
    <source>
    </source>
</evidence>
<evidence type="ECO:0000305" key="6"/>
<evidence type="ECO:0000312" key="7">
    <source>
        <dbReference type="FlyBase" id="FBgn0013763"/>
    </source>
</evidence>
<gene>
    <name evidence="7" type="primary">Idgf6</name>
    <name evidence="7" type="ORF">CG5210</name>
</gene>
<feature type="signal peptide" evidence="5">
    <location>
        <begin position="1"/>
        <end position="18"/>
    </location>
</feature>
<feature type="chain" id="PRO_0000011979" description="Imaginal disk growth factor 6">
    <location>
        <begin position="19"/>
        <end position="452"/>
    </location>
</feature>
<feature type="domain" description="GH18" evidence="2">
    <location>
        <begin position="29"/>
        <end position="452"/>
    </location>
</feature>
<feature type="glycosylation site" description="N-linked (GlcNAc...) asparagine" evidence="1">
    <location>
        <position position="233"/>
    </location>
</feature>
<feature type="disulfide bond" evidence="2">
    <location>
        <begin position="33"/>
        <end position="60"/>
    </location>
</feature>
<feature type="disulfide bond" evidence="1">
    <location>
        <begin position="352"/>
        <end position="435"/>
    </location>
</feature>
<feature type="sequence variant" description="In strain: ZBMEL229." evidence="4">
    <original>V</original>
    <variation>L</variation>
    <location>
        <position position="228"/>
    </location>
</feature>
<feature type="sequence variant" description="In strain: ZBMEL131, ZBMEL157, ZBMEL186 and ZBMEL191." evidence="4 5">
    <original>V</original>
    <variation>I</variation>
    <location>
        <position position="266"/>
    </location>
</feature>
<feature type="sequence variant" description="In strain: ZBMEL131, ZBMEL186, ZBMEL229, ZBMEL377 and ZBMEL398." evidence="4">
    <original>N</original>
    <variation>S</variation>
    <location>
        <position position="296"/>
    </location>
</feature>
<feature type="sequence conflict" description="In Ref. 1; AAC48306." evidence="6" ref="1">
    <original>S</original>
    <variation>N</variation>
    <location>
        <position position="180"/>
    </location>
</feature>
<sequence length="452" mass="50354">MIIKALAIVSLCLASIQASKVGAPQLPKKHLVCYYDSASFVKEGLGKLVIDELEPALQFCDYLVYGYAGIERDSHKAVSLNQQLDLDLGKGLYRTVTRLKRKYPNVKILLSVGGDKDIELDKDAKELPNKYLELLESPTGRTRFVNTVYSLVKTYGFDGLDVAWQFPKNKPKKVHSGIGSLWKGFKKVFSGDSIVDEKSEEHKEQFTALLRDVKNAFRPDNLLLSTTVLPNVNSSLFYDIPAVVNYLDFVNLGTFDFFTPQRNPEVADYAAPIYELSERNPEFNVAAQVKYWLRNNCPASKINVGVATYGRPWKLTDDSGDTGVPPVKDVKDEAPVGGNTQVPGIYSWPEVCALLPNQNNAYLKGANAPLIKVQDPAKRFGSYAYRAADKKGDNGIWVSFEDPDTAADKAGYVRTENLGGVALFDLSYDDFRGLCTNEKYPILRAIKYRLTN</sequence>
<organism>
    <name type="scientific">Drosophila melanogaster</name>
    <name type="common">Fruit fly</name>
    <dbReference type="NCBI Taxonomy" id="7227"/>
    <lineage>
        <taxon>Eukaryota</taxon>
        <taxon>Metazoa</taxon>
        <taxon>Ecdysozoa</taxon>
        <taxon>Arthropoda</taxon>
        <taxon>Hexapoda</taxon>
        <taxon>Insecta</taxon>
        <taxon>Pterygota</taxon>
        <taxon>Neoptera</taxon>
        <taxon>Endopterygota</taxon>
        <taxon>Diptera</taxon>
        <taxon>Brachycera</taxon>
        <taxon>Muscomorpha</taxon>
        <taxon>Ephydroidea</taxon>
        <taxon>Drosophilidae</taxon>
        <taxon>Drosophila</taxon>
        <taxon>Sophophora</taxon>
    </lineage>
</organism>
<protein>
    <recommendedName>
        <fullName evidence="7">Imaginal disk growth factor 6</fullName>
    </recommendedName>
</protein>